<protein>
    <recommendedName>
        <fullName>Rho-related GTP-binding protein RhoF</fullName>
    </recommendedName>
    <alternativeName>
        <fullName>Rho family GTPase Rif</fullName>
    </alternativeName>
    <alternativeName>
        <fullName>Rho in filopodia</fullName>
    </alternativeName>
</protein>
<evidence type="ECO:0000250" key="1"/>
<evidence type="ECO:0000255" key="2"/>
<evidence type="ECO:0000303" key="3">
    <source>
    </source>
</evidence>
<evidence type="ECO:0000305" key="4"/>
<evidence type="ECO:0007744" key="5">
    <source>
    </source>
</evidence>
<feature type="chain" id="PRO_0000198865" description="Rho-related GTP-binding protein RhoF">
    <location>
        <begin position="1"/>
        <end position="208"/>
    </location>
</feature>
<feature type="propeptide" id="PRO_0000281216" description="Removed in mature form" evidence="2">
    <location>
        <begin position="209"/>
        <end position="211"/>
    </location>
</feature>
<feature type="short sequence motif" description="Effector region" evidence="2">
    <location>
        <begin position="48"/>
        <end position="56"/>
    </location>
</feature>
<feature type="binding site" evidence="1">
    <location>
        <begin position="26"/>
        <end position="33"/>
    </location>
    <ligand>
        <name>GTP</name>
        <dbReference type="ChEBI" id="CHEBI:37565"/>
    </ligand>
</feature>
<feature type="binding site" evidence="1">
    <location>
        <begin position="73"/>
        <end position="77"/>
    </location>
    <ligand>
        <name>GTP</name>
        <dbReference type="ChEBI" id="CHEBI:37565"/>
    </ligand>
</feature>
<feature type="binding site" evidence="1">
    <location>
        <begin position="131"/>
        <end position="134"/>
    </location>
    <ligand>
        <name>GTP</name>
        <dbReference type="ChEBI" id="CHEBI:37565"/>
    </ligand>
</feature>
<feature type="modified residue" description="N-acetylmethionine" evidence="5">
    <location>
        <position position="1"/>
    </location>
</feature>
<feature type="modified residue" description="Cysteine methyl ester" evidence="2">
    <location>
        <position position="208"/>
    </location>
</feature>
<feature type="lipid moiety-binding region" description="S-geranylgeranyl cysteine" evidence="2">
    <location>
        <position position="208"/>
    </location>
</feature>
<feature type="splice variant" id="VSP_013571" description="In isoform 2." evidence="3">
    <original>GLSACEQIRAALY</original>
    <variation>VGRGQDPGAQPWL</variation>
    <location>
        <begin position="158"/>
        <end position="170"/>
    </location>
</feature>
<feature type="splice variant" id="VSP_013572" description="In isoform 2." evidence="3">
    <location>
        <begin position="171"/>
        <end position="211"/>
    </location>
</feature>
<feature type="sequence conflict" description="In Ref. 2; BAA91034." evidence="4" ref="2">
    <original>L</original>
    <variation>P</variation>
    <location>
        <position position="142"/>
    </location>
</feature>
<feature type="sequence conflict" description="In Ref. 2; BAA91034." evidence="4" ref="2">
    <original>L</original>
    <variation>P</variation>
    <location>
        <position position="207"/>
    </location>
</feature>
<dbReference type="EMBL" id="AF239923">
    <property type="protein sequence ID" value="AAG24952.1"/>
    <property type="molecule type" value="mRNA"/>
</dbReference>
<dbReference type="EMBL" id="AK000254">
    <property type="protein sequence ID" value="BAA91034.1"/>
    <property type="molecule type" value="mRNA"/>
</dbReference>
<dbReference type="EMBL" id="BC018208">
    <property type="protein sequence ID" value="AAH18208.1"/>
    <property type="molecule type" value="mRNA"/>
</dbReference>
<dbReference type="CCDS" id="CCDS9222.1">
    <molecule id="Q9HBH0-1"/>
</dbReference>
<dbReference type="RefSeq" id="NP_061907.2">
    <molecule id="Q9HBH0-1"/>
    <property type="nucleotide sequence ID" value="NM_019034.2"/>
</dbReference>
<dbReference type="SMR" id="Q9HBH0"/>
<dbReference type="BioGRID" id="120004">
    <property type="interactions" value="682"/>
</dbReference>
<dbReference type="FunCoup" id="Q9HBH0">
    <property type="interactions" value="933"/>
</dbReference>
<dbReference type="IntAct" id="Q9HBH0">
    <property type="interactions" value="25"/>
</dbReference>
<dbReference type="STRING" id="9606.ENSP00000267205"/>
<dbReference type="GlyGen" id="Q9HBH0">
    <property type="glycosylation" value="1 site, 1 O-linked glycan (1 site)"/>
</dbReference>
<dbReference type="iPTMnet" id="Q9HBH0"/>
<dbReference type="PhosphoSitePlus" id="Q9HBH0"/>
<dbReference type="BioMuta" id="RHOF"/>
<dbReference type="DMDM" id="13633711"/>
<dbReference type="jPOST" id="Q9HBH0"/>
<dbReference type="MassIVE" id="Q9HBH0"/>
<dbReference type="PaxDb" id="9606-ENSP00000267205"/>
<dbReference type="PeptideAtlas" id="Q9HBH0"/>
<dbReference type="ProteomicsDB" id="81548">
    <molecule id="Q9HBH0-1"/>
</dbReference>
<dbReference type="ProteomicsDB" id="81549">
    <molecule id="Q9HBH0-2"/>
</dbReference>
<dbReference type="Pumba" id="Q9HBH0"/>
<dbReference type="Antibodypedia" id="31593">
    <property type="antibodies" value="247 antibodies from 28 providers"/>
</dbReference>
<dbReference type="DNASU" id="54509"/>
<dbReference type="Ensembl" id="ENST00000267205.7">
    <molecule id="Q9HBH0-1"/>
    <property type="protein sequence ID" value="ENSP00000267205.2"/>
    <property type="gene ID" value="ENSG00000139725.8"/>
</dbReference>
<dbReference type="Ensembl" id="ENST00000537171.5">
    <molecule id="Q9HBH0-2"/>
    <property type="protein sequence ID" value="ENSP00000477391.1"/>
    <property type="gene ID" value="ENSG00000139725.8"/>
</dbReference>
<dbReference type="GeneID" id="54509"/>
<dbReference type="KEGG" id="hsa:54509"/>
<dbReference type="MANE-Select" id="ENST00000267205.7">
    <property type="protein sequence ID" value="ENSP00000267205.2"/>
    <property type="RefSeq nucleotide sequence ID" value="NM_019034.3"/>
    <property type="RefSeq protein sequence ID" value="NP_061907.2"/>
</dbReference>
<dbReference type="UCSC" id="uc001ubb.4">
    <molecule id="Q9HBH0-1"/>
    <property type="organism name" value="human"/>
</dbReference>
<dbReference type="AGR" id="HGNC:15703"/>
<dbReference type="CTD" id="54509"/>
<dbReference type="DisGeNET" id="54509"/>
<dbReference type="GeneCards" id="RHOF"/>
<dbReference type="HGNC" id="HGNC:15703">
    <property type="gene designation" value="RHOF"/>
</dbReference>
<dbReference type="HPA" id="ENSG00000139725">
    <property type="expression patterns" value="Low tissue specificity"/>
</dbReference>
<dbReference type="MIM" id="618867">
    <property type="type" value="gene"/>
</dbReference>
<dbReference type="neXtProt" id="NX_Q9HBH0"/>
<dbReference type="OpenTargets" id="ENSG00000139725"/>
<dbReference type="PharmGKB" id="PA24954"/>
<dbReference type="VEuPathDB" id="HostDB:ENSG00000139725"/>
<dbReference type="eggNOG" id="KOG0393">
    <property type="taxonomic scope" value="Eukaryota"/>
</dbReference>
<dbReference type="GeneTree" id="ENSGT00940000158903"/>
<dbReference type="HOGENOM" id="CLU_041217_21_2_1"/>
<dbReference type="InParanoid" id="Q9HBH0"/>
<dbReference type="OMA" id="CSAKHQE"/>
<dbReference type="OrthoDB" id="8830751at2759"/>
<dbReference type="PAN-GO" id="Q9HBH0">
    <property type="GO annotations" value="14 GO annotations based on evolutionary models"/>
</dbReference>
<dbReference type="PhylomeDB" id="Q9HBH0"/>
<dbReference type="TreeFam" id="TF331746"/>
<dbReference type="PathwayCommons" id="Q9HBH0"/>
<dbReference type="Reactome" id="R-HSA-6798695">
    <property type="pathway name" value="Neutrophil degranulation"/>
</dbReference>
<dbReference type="Reactome" id="R-HSA-9035034">
    <property type="pathway name" value="RHOF GTPase cycle"/>
</dbReference>
<dbReference type="SignaLink" id="Q9HBH0"/>
<dbReference type="BioGRID-ORCS" id="54509">
    <property type="hits" value="44 hits in 1145 CRISPR screens"/>
</dbReference>
<dbReference type="ChiTaRS" id="RHOF">
    <property type="organism name" value="human"/>
</dbReference>
<dbReference type="GenomeRNAi" id="54509"/>
<dbReference type="Pharos" id="Q9HBH0">
    <property type="development level" value="Tbio"/>
</dbReference>
<dbReference type="PRO" id="PR:Q9HBH0"/>
<dbReference type="Proteomes" id="UP000005640">
    <property type="component" value="Chromosome 12"/>
</dbReference>
<dbReference type="RNAct" id="Q9HBH0">
    <property type="molecule type" value="protein"/>
</dbReference>
<dbReference type="Bgee" id="ENSG00000139725">
    <property type="expression patterns" value="Expressed in granulocyte and 155 other cell types or tissues"/>
</dbReference>
<dbReference type="ExpressionAtlas" id="Q9HBH0">
    <property type="expression patterns" value="baseline and differential"/>
</dbReference>
<dbReference type="GO" id="GO:0005856">
    <property type="term" value="C:cytoskeleton"/>
    <property type="evidence" value="ECO:0000303"/>
    <property type="project" value="UniProtKB"/>
</dbReference>
<dbReference type="GO" id="GO:0005829">
    <property type="term" value="C:cytosol"/>
    <property type="evidence" value="ECO:0000318"/>
    <property type="project" value="GO_Central"/>
</dbReference>
<dbReference type="GO" id="GO:0070062">
    <property type="term" value="C:extracellular exosome"/>
    <property type="evidence" value="ECO:0007005"/>
    <property type="project" value="UniProtKB"/>
</dbReference>
<dbReference type="GO" id="GO:0005886">
    <property type="term" value="C:plasma membrane"/>
    <property type="evidence" value="ECO:0000318"/>
    <property type="project" value="GO_Central"/>
</dbReference>
<dbReference type="GO" id="GO:0030667">
    <property type="term" value="C:secretory granule membrane"/>
    <property type="evidence" value="ECO:0000304"/>
    <property type="project" value="Reactome"/>
</dbReference>
<dbReference type="GO" id="GO:0005525">
    <property type="term" value="F:GTP binding"/>
    <property type="evidence" value="ECO:0000318"/>
    <property type="project" value="GO_Central"/>
</dbReference>
<dbReference type="GO" id="GO:0003924">
    <property type="term" value="F:GTPase activity"/>
    <property type="evidence" value="ECO:0000318"/>
    <property type="project" value="GO_Central"/>
</dbReference>
<dbReference type="GO" id="GO:0005085">
    <property type="term" value="F:guanyl-nucleotide exchange factor activity"/>
    <property type="evidence" value="ECO:0000304"/>
    <property type="project" value="Reactome"/>
</dbReference>
<dbReference type="GO" id="GO:0019901">
    <property type="term" value="F:protein kinase binding"/>
    <property type="evidence" value="ECO:0000318"/>
    <property type="project" value="GO_Central"/>
</dbReference>
<dbReference type="GO" id="GO:0007015">
    <property type="term" value="P:actin filament organization"/>
    <property type="evidence" value="ECO:0000314"/>
    <property type="project" value="UniProtKB"/>
</dbReference>
<dbReference type="GO" id="GO:0016477">
    <property type="term" value="P:cell migration"/>
    <property type="evidence" value="ECO:0000318"/>
    <property type="project" value="GO_Central"/>
</dbReference>
<dbReference type="GO" id="GO:0032956">
    <property type="term" value="P:regulation of actin cytoskeleton organization"/>
    <property type="evidence" value="ECO:0000318"/>
    <property type="project" value="GO_Central"/>
</dbReference>
<dbReference type="GO" id="GO:0051056">
    <property type="term" value="P:regulation of small GTPase mediated signal transduction"/>
    <property type="evidence" value="ECO:0000304"/>
    <property type="project" value="Reactome"/>
</dbReference>
<dbReference type="GO" id="GO:0007165">
    <property type="term" value="P:signal transduction"/>
    <property type="evidence" value="ECO:0000318"/>
    <property type="project" value="GO_Central"/>
</dbReference>
<dbReference type="GO" id="GO:0007264">
    <property type="term" value="P:small GTPase-mediated signal transduction"/>
    <property type="evidence" value="ECO:0007669"/>
    <property type="project" value="InterPro"/>
</dbReference>
<dbReference type="CDD" id="cd04132">
    <property type="entry name" value="Rho4_like"/>
    <property type="match status" value="1"/>
</dbReference>
<dbReference type="FunFam" id="3.40.50.300:FF:000676">
    <property type="entry name" value="Ras homolog family member F"/>
    <property type="match status" value="1"/>
</dbReference>
<dbReference type="Gene3D" id="3.40.50.300">
    <property type="entry name" value="P-loop containing nucleotide triphosphate hydrolases"/>
    <property type="match status" value="1"/>
</dbReference>
<dbReference type="InterPro" id="IPR027417">
    <property type="entry name" value="P-loop_NTPase"/>
</dbReference>
<dbReference type="InterPro" id="IPR005225">
    <property type="entry name" value="Small_GTP-bd"/>
</dbReference>
<dbReference type="InterPro" id="IPR001806">
    <property type="entry name" value="Small_GTPase"/>
</dbReference>
<dbReference type="InterPro" id="IPR003578">
    <property type="entry name" value="Small_GTPase_Rho"/>
</dbReference>
<dbReference type="NCBIfam" id="TIGR00231">
    <property type="entry name" value="small_GTP"/>
    <property type="match status" value="1"/>
</dbReference>
<dbReference type="PANTHER" id="PTHR24072">
    <property type="entry name" value="RHO FAMILY GTPASE"/>
    <property type="match status" value="1"/>
</dbReference>
<dbReference type="Pfam" id="PF00071">
    <property type="entry name" value="Ras"/>
    <property type="match status" value="1"/>
</dbReference>
<dbReference type="PRINTS" id="PR00449">
    <property type="entry name" value="RASTRNSFRMNG"/>
</dbReference>
<dbReference type="SMART" id="SM00175">
    <property type="entry name" value="RAB"/>
    <property type="match status" value="1"/>
</dbReference>
<dbReference type="SMART" id="SM00176">
    <property type="entry name" value="RAN"/>
    <property type="match status" value="1"/>
</dbReference>
<dbReference type="SMART" id="SM00173">
    <property type="entry name" value="RAS"/>
    <property type="match status" value="1"/>
</dbReference>
<dbReference type="SMART" id="SM00174">
    <property type="entry name" value="RHO"/>
    <property type="match status" value="1"/>
</dbReference>
<dbReference type="SUPFAM" id="SSF52540">
    <property type="entry name" value="P-loop containing nucleoside triphosphate hydrolases"/>
    <property type="match status" value="1"/>
</dbReference>
<dbReference type="PROSITE" id="PS51420">
    <property type="entry name" value="RHO"/>
    <property type="match status" value="1"/>
</dbReference>
<comment type="function">
    <text>Plasma membrane-associated small GTPase which cycles between an active GTP-bound and an inactive GDP-bound state. Causes the formation of thin, actin-rich surface projections called filopodia. Functions cooperatively with CDC42 and Rac to generate additional structures, increasing the diversity of actin-based morphology.</text>
</comment>
<comment type="subcellular location">
    <subcellularLocation>
        <location evidence="4">Cell membrane</location>
        <topology evidence="4">Lipid-anchor</topology>
        <orientation evidence="4">Cytoplasmic side</orientation>
    </subcellularLocation>
    <subcellularLocation>
        <location>Cytoplasm</location>
        <location>Cytoskeleton</location>
    </subcellularLocation>
</comment>
<comment type="alternative products">
    <event type="alternative splicing"/>
    <isoform>
        <id>Q9HBH0-1</id>
        <name>1</name>
        <sequence type="displayed"/>
    </isoform>
    <isoform>
        <id>Q9HBH0-2</id>
        <name>2</name>
        <sequence type="described" ref="VSP_013571 VSP_013572"/>
    </isoform>
</comment>
<comment type="similarity">
    <text evidence="4">Belongs to the small GTPase superfamily. Rho family.</text>
</comment>
<gene>
    <name type="primary">RHOF</name>
    <name type="synonym">ARHF</name>
    <name type="synonym">RIF</name>
</gene>
<keyword id="KW-0007">Acetylation</keyword>
<keyword id="KW-0025">Alternative splicing</keyword>
<keyword id="KW-1003">Cell membrane</keyword>
<keyword id="KW-0963">Cytoplasm</keyword>
<keyword id="KW-0206">Cytoskeleton</keyword>
<keyword id="KW-0342">GTP-binding</keyword>
<keyword id="KW-0449">Lipoprotein</keyword>
<keyword id="KW-0472">Membrane</keyword>
<keyword id="KW-0488">Methylation</keyword>
<keyword id="KW-0547">Nucleotide-binding</keyword>
<keyword id="KW-0636">Prenylation</keyword>
<keyword id="KW-1267">Proteomics identification</keyword>
<keyword id="KW-1185">Reference proteome</keyword>
<organism>
    <name type="scientific">Homo sapiens</name>
    <name type="common">Human</name>
    <dbReference type="NCBI Taxonomy" id="9606"/>
    <lineage>
        <taxon>Eukaryota</taxon>
        <taxon>Metazoa</taxon>
        <taxon>Chordata</taxon>
        <taxon>Craniata</taxon>
        <taxon>Vertebrata</taxon>
        <taxon>Euteleostomi</taxon>
        <taxon>Mammalia</taxon>
        <taxon>Eutheria</taxon>
        <taxon>Euarchontoglires</taxon>
        <taxon>Primates</taxon>
        <taxon>Haplorrhini</taxon>
        <taxon>Catarrhini</taxon>
        <taxon>Hominidae</taxon>
        <taxon>Homo</taxon>
    </lineage>
</organism>
<proteinExistence type="evidence at protein level"/>
<name>RHOF_HUMAN</name>
<accession>Q9HBH0</accession>
<accession>Q8WVB1</accession>
<accession>Q9NXH6</accession>
<sequence>MDAPGALAQTAAPGPGRKELKIVIVGDGGCGKTSLLMVYSQGSFPEHYAPSVFEKYTASVTVGSKEVTLNLYDTAGQEDYDRLRPLSYQNTHLVLICYDVMNPTSYDNVLIKWFPEVTHFCRGIPMVLIGCKTDLRKDKEQLRKLRAAQLEPITYMQGLSACEQIRAALYLECSAKFRENVEDVFREAAKVALSALKKAQRQKKRRLCLLL</sequence>
<reference key="1">
    <citation type="journal article" date="2000" name="Curr. Biol.">
        <title>The novel Rho-family GTPase rif regulates coordinated actin-based membrane rearrangements.</title>
        <authorList>
            <person name="Ellis S."/>
            <person name="Mellor H."/>
        </authorList>
    </citation>
    <scope>NUCLEOTIDE SEQUENCE [MRNA] (ISOFORM 1)</scope>
</reference>
<reference key="2">
    <citation type="journal article" date="2004" name="Nat. Genet.">
        <title>Complete sequencing and characterization of 21,243 full-length human cDNAs.</title>
        <authorList>
            <person name="Ota T."/>
            <person name="Suzuki Y."/>
            <person name="Nishikawa T."/>
            <person name="Otsuki T."/>
            <person name="Sugiyama T."/>
            <person name="Irie R."/>
            <person name="Wakamatsu A."/>
            <person name="Hayashi K."/>
            <person name="Sato H."/>
            <person name="Nagai K."/>
            <person name="Kimura K."/>
            <person name="Makita H."/>
            <person name="Sekine M."/>
            <person name="Obayashi M."/>
            <person name="Nishi T."/>
            <person name="Shibahara T."/>
            <person name="Tanaka T."/>
            <person name="Ishii S."/>
            <person name="Yamamoto J."/>
            <person name="Saito K."/>
            <person name="Kawai Y."/>
            <person name="Isono Y."/>
            <person name="Nakamura Y."/>
            <person name="Nagahari K."/>
            <person name="Murakami K."/>
            <person name="Yasuda T."/>
            <person name="Iwayanagi T."/>
            <person name="Wagatsuma M."/>
            <person name="Shiratori A."/>
            <person name="Sudo H."/>
            <person name="Hosoiri T."/>
            <person name="Kaku Y."/>
            <person name="Kodaira H."/>
            <person name="Kondo H."/>
            <person name="Sugawara M."/>
            <person name="Takahashi M."/>
            <person name="Kanda K."/>
            <person name="Yokoi T."/>
            <person name="Furuya T."/>
            <person name="Kikkawa E."/>
            <person name="Omura Y."/>
            <person name="Abe K."/>
            <person name="Kamihara K."/>
            <person name="Katsuta N."/>
            <person name="Sato K."/>
            <person name="Tanikawa M."/>
            <person name="Yamazaki M."/>
            <person name="Ninomiya K."/>
            <person name="Ishibashi T."/>
            <person name="Yamashita H."/>
            <person name="Murakawa K."/>
            <person name="Fujimori K."/>
            <person name="Tanai H."/>
            <person name="Kimata M."/>
            <person name="Watanabe M."/>
            <person name="Hiraoka S."/>
            <person name="Chiba Y."/>
            <person name="Ishida S."/>
            <person name="Ono Y."/>
            <person name="Takiguchi S."/>
            <person name="Watanabe S."/>
            <person name="Yosida M."/>
            <person name="Hotuta T."/>
            <person name="Kusano J."/>
            <person name="Kanehori K."/>
            <person name="Takahashi-Fujii A."/>
            <person name="Hara H."/>
            <person name="Tanase T.-O."/>
            <person name="Nomura Y."/>
            <person name="Togiya S."/>
            <person name="Komai F."/>
            <person name="Hara R."/>
            <person name="Takeuchi K."/>
            <person name="Arita M."/>
            <person name="Imose N."/>
            <person name="Musashino K."/>
            <person name="Yuuki H."/>
            <person name="Oshima A."/>
            <person name="Sasaki N."/>
            <person name="Aotsuka S."/>
            <person name="Yoshikawa Y."/>
            <person name="Matsunawa H."/>
            <person name="Ichihara T."/>
            <person name="Shiohata N."/>
            <person name="Sano S."/>
            <person name="Moriya S."/>
            <person name="Momiyama H."/>
            <person name="Satoh N."/>
            <person name="Takami S."/>
            <person name="Terashima Y."/>
            <person name="Suzuki O."/>
            <person name="Nakagawa S."/>
            <person name="Senoh A."/>
            <person name="Mizoguchi H."/>
            <person name="Goto Y."/>
            <person name="Shimizu F."/>
            <person name="Wakebe H."/>
            <person name="Hishigaki H."/>
            <person name="Watanabe T."/>
            <person name="Sugiyama A."/>
            <person name="Takemoto M."/>
            <person name="Kawakami B."/>
            <person name="Yamazaki M."/>
            <person name="Watanabe K."/>
            <person name="Kumagai A."/>
            <person name="Itakura S."/>
            <person name="Fukuzumi Y."/>
            <person name="Fujimori Y."/>
            <person name="Komiyama M."/>
            <person name="Tashiro H."/>
            <person name="Tanigami A."/>
            <person name="Fujiwara T."/>
            <person name="Ono T."/>
            <person name="Yamada K."/>
            <person name="Fujii Y."/>
            <person name="Ozaki K."/>
            <person name="Hirao M."/>
            <person name="Ohmori Y."/>
            <person name="Kawabata A."/>
            <person name="Hikiji T."/>
            <person name="Kobatake N."/>
            <person name="Inagaki H."/>
            <person name="Ikema Y."/>
            <person name="Okamoto S."/>
            <person name="Okitani R."/>
            <person name="Kawakami T."/>
            <person name="Noguchi S."/>
            <person name="Itoh T."/>
            <person name="Shigeta K."/>
            <person name="Senba T."/>
            <person name="Matsumura K."/>
            <person name="Nakajima Y."/>
            <person name="Mizuno T."/>
            <person name="Morinaga M."/>
            <person name="Sasaki M."/>
            <person name="Togashi T."/>
            <person name="Oyama M."/>
            <person name="Hata H."/>
            <person name="Watanabe M."/>
            <person name="Komatsu T."/>
            <person name="Mizushima-Sugano J."/>
            <person name="Satoh T."/>
            <person name="Shirai Y."/>
            <person name="Takahashi Y."/>
            <person name="Nakagawa K."/>
            <person name="Okumura K."/>
            <person name="Nagase T."/>
            <person name="Nomura N."/>
            <person name="Kikuchi H."/>
            <person name="Masuho Y."/>
            <person name="Yamashita R."/>
            <person name="Nakai K."/>
            <person name="Yada T."/>
            <person name="Nakamura Y."/>
            <person name="Ohara O."/>
            <person name="Isogai T."/>
            <person name="Sugano S."/>
        </authorList>
    </citation>
    <scope>NUCLEOTIDE SEQUENCE [LARGE SCALE MRNA] (ISOFORM 1)</scope>
    <source>
        <tissue>Colon mucosa</tissue>
    </source>
</reference>
<reference key="3">
    <citation type="journal article" date="2004" name="Genome Res.">
        <title>The status, quality, and expansion of the NIH full-length cDNA project: the Mammalian Gene Collection (MGC).</title>
        <authorList>
            <consortium name="The MGC Project Team"/>
        </authorList>
    </citation>
    <scope>NUCLEOTIDE SEQUENCE [LARGE SCALE MRNA] (ISOFORM 2)</scope>
    <source>
        <tissue>Ovary</tissue>
    </source>
</reference>
<reference key="4">
    <citation type="journal article" date="2012" name="Proc. Natl. Acad. Sci. U.S.A.">
        <title>N-terminal acetylome analyses and functional insights of the N-terminal acetyltransferase NatB.</title>
        <authorList>
            <person name="Van Damme P."/>
            <person name="Lasa M."/>
            <person name="Polevoda B."/>
            <person name="Gazquez C."/>
            <person name="Elosegui-Artola A."/>
            <person name="Kim D.S."/>
            <person name="De Juan-Pardo E."/>
            <person name="Demeyer K."/>
            <person name="Hole K."/>
            <person name="Larrea E."/>
            <person name="Timmerman E."/>
            <person name="Prieto J."/>
            <person name="Arnesen T."/>
            <person name="Sherman F."/>
            <person name="Gevaert K."/>
            <person name="Aldabe R."/>
        </authorList>
    </citation>
    <scope>ACETYLATION [LARGE SCALE ANALYSIS] AT MET-1</scope>
    <scope>IDENTIFICATION BY MASS SPECTROMETRY [LARGE SCALE ANALYSIS]</scope>
</reference>